<dbReference type="EMBL" id="BC088171">
    <property type="protein sequence ID" value="AAH88171.1"/>
    <property type="molecule type" value="mRNA"/>
</dbReference>
<dbReference type="EMBL" id="BC090337">
    <property type="protein sequence ID" value="AAH90337.1"/>
    <property type="molecule type" value="mRNA"/>
</dbReference>
<dbReference type="RefSeq" id="NP_001014032.1">
    <property type="nucleotide sequence ID" value="NM_001014010.2"/>
</dbReference>
<dbReference type="RefSeq" id="NP_001406412.1">
    <property type="nucleotide sequence ID" value="NM_001419483.1"/>
</dbReference>
<dbReference type="RefSeq" id="NP_001406413.1">
    <property type="nucleotide sequence ID" value="NM_001419484.1"/>
</dbReference>
<dbReference type="RefSeq" id="NP_001406414.1">
    <property type="nucleotide sequence ID" value="NM_001419485.1"/>
</dbReference>
<dbReference type="RefSeq" id="XP_017456042.1">
    <property type="nucleotide sequence ID" value="XM_017600553.1"/>
</dbReference>
<dbReference type="RefSeq" id="XP_017456043.1">
    <property type="nucleotide sequence ID" value="XM_017600554.1"/>
</dbReference>
<dbReference type="RefSeq" id="XP_017456044.1">
    <property type="nucleotide sequence ID" value="XM_017600555.1"/>
</dbReference>
<dbReference type="SMR" id="Q5M888"/>
<dbReference type="FunCoup" id="Q5M888">
    <property type="interactions" value="1399"/>
</dbReference>
<dbReference type="STRING" id="10116.ENSRNOP00000020794"/>
<dbReference type="PhosphoSitePlus" id="Q5M888"/>
<dbReference type="PaxDb" id="10116-ENSRNOP00000020794"/>
<dbReference type="Ensembl" id="ENSRNOT00000020794.6">
    <property type="protein sequence ID" value="ENSRNOP00000020794.4"/>
    <property type="gene ID" value="ENSRNOG00000015523.6"/>
</dbReference>
<dbReference type="Ensembl" id="ENSRNOT00000114059.1">
    <property type="protein sequence ID" value="ENSRNOP00000096046.1"/>
    <property type="gene ID" value="ENSRNOG00000015523.6"/>
</dbReference>
<dbReference type="GeneID" id="307008"/>
<dbReference type="KEGG" id="rno:307008"/>
<dbReference type="UCSC" id="RGD:1308147">
    <property type="organism name" value="rat"/>
</dbReference>
<dbReference type="AGR" id="RGD:1308147"/>
<dbReference type="CTD" id="307008"/>
<dbReference type="RGD" id="1308147">
    <property type="gene designation" value="C17h7orf25"/>
</dbReference>
<dbReference type="eggNOG" id="KOG4529">
    <property type="taxonomic scope" value="Eukaryota"/>
</dbReference>
<dbReference type="GeneTree" id="ENSGT00390000014722"/>
<dbReference type="HOGENOM" id="CLU_054053_0_0_1"/>
<dbReference type="InParanoid" id="Q5M888"/>
<dbReference type="OMA" id="HFCMFQR"/>
<dbReference type="PhylomeDB" id="Q5M888"/>
<dbReference type="PRO" id="PR:Q5M888"/>
<dbReference type="Proteomes" id="UP000002494">
    <property type="component" value="Chromosome 17"/>
</dbReference>
<dbReference type="Bgee" id="ENSRNOG00000015523">
    <property type="expression patterns" value="Expressed in pancreas and 20 other cell types or tissues"/>
</dbReference>
<dbReference type="InterPro" id="IPR010733">
    <property type="entry name" value="DUF1308"/>
</dbReference>
<dbReference type="InterPro" id="IPR041076">
    <property type="entry name" value="DUF5614"/>
</dbReference>
<dbReference type="PANTHER" id="PTHR13379">
    <property type="entry name" value="UNCHARACTERIZED DUF1308"/>
    <property type="match status" value="1"/>
</dbReference>
<dbReference type="PANTHER" id="PTHR13379:SF0">
    <property type="entry name" value="UPF0415 PROTEIN C7ORF25"/>
    <property type="match status" value="1"/>
</dbReference>
<dbReference type="Pfam" id="PF07000">
    <property type="entry name" value="DUF1308"/>
    <property type="match status" value="1"/>
</dbReference>
<dbReference type="Pfam" id="PF18474">
    <property type="entry name" value="DUF5614"/>
    <property type="match status" value="1"/>
</dbReference>
<organism>
    <name type="scientific">Rattus norvegicus</name>
    <name type="common">Rat</name>
    <dbReference type="NCBI Taxonomy" id="10116"/>
    <lineage>
        <taxon>Eukaryota</taxon>
        <taxon>Metazoa</taxon>
        <taxon>Chordata</taxon>
        <taxon>Craniata</taxon>
        <taxon>Vertebrata</taxon>
        <taxon>Euteleostomi</taxon>
        <taxon>Mammalia</taxon>
        <taxon>Eutheria</taxon>
        <taxon>Euarchontoglires</taxon>
        <taxon>Glires</taxon>
        <taxon>Rodentia</taxon>
        <taxon>Myomorpha</taxon>
        <taxon>Muroidea</taxon>
        <taxon>Muridae</taxon>
        <taxon>Murinae</taxon>
        <taxon>Rattus</taxon>
    </lineage>
</organism>
<comment type="similarity">
    <text evidence="1">Belongs to the UPF0415 family.</text>
</comment>
<keyword id="KW-1185">Reference proteome</keyword>
<proteinExistence type="evidence at transcript level"/>
<sequence>MSAYSMLSERIAMAKELIKRAESLSRSKKGGIEGGAKLCSKLKSELKFLQKIESGKVAIKESHLQSTNLTHLKAIVESAENLEEVVSVLRVFGYTDSLGEKQTLVVDVVANGGHTWVKAIGRKAEALHNIWLGRGQYGDKSIIEQAEDFLQASRQQPVQYSNPHIVFAFYNSVSSPMADKLKDMGISVRGDIVAVNSLLNHPEEYLLSESESDDEGQELLQVTRVDLDNVLARVAFPTEIKVDVCRRVNLDITTLITYVSAMSYGGCHFIFKEKVLTEQAEQERKERVLPQLEAFMKDKELFACESAVKDFQSILDTLGGPGERERAAVLIKRINVVPDQPSERALKLVASSKINSRSLTIFGTGDTLKAITMTANSGFVRAANNQGVKFSVFIHQPRALTESKEALAVPLPKARTNDSAH</sequence>
<accession>Q5M888</accession>
<protein>
    <recommendedName>
        <fullName>UPF0415 protein C7orf25 homolog</fullName>
    </recommendedName>
</protein>
<evidence type="ECO:0000305" key="1"/>
<reference key="1">
    <citation type="journal article" date="2004" name="Genome Res.">
        <title>The status, quality, and expansion of the NIH full-length cDNA project: the Mammalian Gene Collection (MGC).</title>
        <authorList>
            <consortium name="The MGC Project Team"/>
        </authorList>
    </citation>
    <scope>NUCLEOTIDE SEQUENCE [LARGE SCALE MRNA]</scope>
    <source>
        <tissue>Liver</tissue>
        <tissue>Ovary</tissue>
    </source>
</reference>
<feature type="chain" id="PRO_0000279531" description="UPF0415 protein C7orf25 homolog">
    <location>
        <begin position="1"/>
        <end position="421"/>
    </location>
</feature>
<name>CG025_RAT</name>